<gene>
    <name type="primary">rps1902</name>
    <name type="synonym">rps19b</name>
    <name type="ORF">SPBC649.02</name>
</gene>
<comment type="function">
    <text evidence="1">Component of the ribosome, a large ribonucleoprotein complex responsible for the synthesis of proteins in the cell. The small ribosomal subunit (SSU) binds messenger RNAs (mRNAs) and translates the encoded message by selecting cognate aminoacyl-transfer RNA (tRNA) molecules. The large subunit (LSU) contains the ribosomal catalytic site termed the peptidyl transferase center (PTC), which catalyzes the formation of peptide bonds, thereby polymerizing the amino acids delivered by tRNAs into a polypeptide chain. The nascent polypeptides leave the ribosome through a tunnel in the LSU and interact with protein factors that function in enzymatic processing, targeting, and the membrane insertion of nascent chains at the exit of the ribosomal tunnel. eS19 is required for proper maturation of the small (40S) ribosomal subunit. Binds to 40S pre-ribosomal particles, probably required after association of NOC4 but before association of ENP1, TSR1 and RIO2 with 20/21S pre-rRNA.</text>
</comment>
<comment type="subunit">
    <text evidence="1">Component of the small ribosomal subunit (SSU). Mature yeast ribosomes consist of a small (40S) and a large (60S) subunit. The 40S small subunit contains 1 molecule of ribosomal RNA (18S rRNA) and at least 33 different proteins. The large 60S subunit contains 3 rRNA molecules (25S, 5.8S and 5S rRNA) and at least 46 different proteins.</text>
</comment>
<comment type="subcellular location">
    <subcellularLocation>
        <location evidence="2">Cytoplasm</location>
    </subcellularLocation>
    <subcellularLocation>
        <location evidence="2">Nucleus</location>
    </subcellularLocation>
</comment>
<comment type="miscellaneous">
    <text>There are 2 genes for eS19 in S.pombe.</text>
</comment>
<comment type="similarity">
    <text evidence="3">Belongs to the eukaryotic ribosomal protein eS19 family.</text>
</comment>
<evidence type="ECO:0000250" key="1">
    <source>
        <dbReference type="UniProtKB" id="P07281"/>
    </source>
</evidence>
<evidence type="ECO:0000269" key="2">
    <source>
    </source>
</evidence>
<evidence type="ECO:0000305" key="3"/>
<accession>P79016</accession>
<accession>O59752</accession>
<keyword id="KW-0963">Cytoplasm</keyword>
<keyword id="KW-0539">Nucleus</keyword>
<keyword id="KW-1185">Reference proteome</keyword>
<keyword id="KW-0687">Ribonucleoprotein</keyword>
<keyword id="KW-0689">Ribosomal protein</keyword>
<dbReference type="EMBL" id="CU329671">
    <property type="protein sequence ID" value="CAA19044.1"/>
    <property type="molecule type" value="Genomic_DNA"/>
</dbReference>
<dbReference type="PIR" id="T40595">
    <property type="entry name" value="T40595"/>
</dbReference>
<dbReference type="RefSeq" id="NP_595221.1">
    <property type="nucleotide sequence ID" value="NM_001021127.2"/>
</dbReference>
<dbReference type="SMR" id="P79016"/>
<dbReference type="BioGRID" id="277599">
    <property type="interactions" value="10"/>
</dbReference>
<dbReference type="FunCoup" id="P79016">
    <property type="interactions" value="478"/>
</dbReference>
<dbReference type="STRING" id="284812.P79016"/>
<dbReference type="iPTMnet" id="P79016"/>
<dbReference type="PaxDb" id="4896-SPBC649.02.1"/>
<dbReference type="EnsemblFungi" id="SPBC649.02.1">
    <property type="protein sequence ID" value="SPBC649.02.1:pep"/>
    <property type="gene ID" value="SPBC649.02"/>
</dbReference>
<dbReference type="GeneID" id="2541084"/>
<dbReference type="KEGG" id="spo:2541084"/>
<dbReference type="PomBase" id="SPBC649.02">
    <property type="gene designation" value="rps1902"/>
</dbReference>
<dbReference type="VEuPathDB" id="FungiDB:SPBC649.02"/>
<dbReference type="eggNOG" id="KOG3411">
    <property type="taxonomic scope" value="Eukaryota"/>
</dbReference>
<dbReference type="HOGENOM" id="CLU_108559_0_0_1"/>
<dbReference type="InParanoid" id="P79016"/>
<dbReference type="OMA" id="YYTRTAS"/>
<dbReference type="PhylomeDB" id="P79016"/>
<dbReference type="PRO" id="PR:P79016"/>
<dbReference type="Proteomes" id="UP000002485">
    <property type="component" value="Chromosome II"/>
</dbReference>
<dbReference type="GO" id="GO:0005829">
    <property type="term" value="C:cytosol"/>
    <property type="evidence" value="ECO:0007005"/>
    <property type="project" value="PomBase"/>
</dbReference>
<dbReference type="GO" id="GO:0022627">
    <property type="term" value="C:cytosolic small ribosomal subunit"/>
    <property type="evidence" value="ECO:0000318"/>
    <property type="project" value="GO_Central"/>
</dbReference>
<dbReference type="GO" id="GO:0005634">
    <property type="term" value="C:nucleus"/>
    <property type="evidence" value="ECO:0007005"/>
    <property type="project" value="PomBase"/>
</dbReference>
<dbReference type="GO" id="GO:0003723">
    <property type="term" value="F:RNA binding"/>
    <property type="evidence" value="ECO:0000318"/>
    <property type="project" value="GO_Central"/>
</dbReference>
<dbReference type="GO" id="GO:0003735">
    <property type="term" value="F:structural constituent of ribosome"/>
    <property type="evidence" value="ECO:0000318"/>
    <property type="project" value="GO_Central"/>
</dbReference>
<dbReference type="GO" id="GO:0002181">
    <property type="term" value="P:cytoplasmic translation"/>
    <property type="evidence" value="ECO:0000266"/>
    <property type="project" value="PomBase"/>
</dbReference>
<dbReference type="GO" id="GO:0000028">
    <property type="term" value="P:ribosomal small subunit assembly"/>
    <property type="evidence" value="ECO:0000318"/>
    <property type="project" value="GO_Central"/>
</dbReference>
<dbReference type="FunFam" id="1.10.10.10:FF:000118">
    <property type="entry name" value="40S ribosomal protein S19"/>
    <property type="match status" value="1"/>
</dbReference>
<dbReference type="Gene3D" id="1.10.10.10">
    <property type="entry name" value="Winged helix-like DNA-binding domain superfamily/Winged helix DNA-binding domain"/>
    <property type="match status" value="1"/>
</dbReference>
<dbReference type="InterPro" id="IPR001266">
    <property type="entry name" value="Ribosomal_eS19"/>
</dbReference>
<dbReference type="InterPro" id="IPR018277">
    <property type="entry name" value="Ribosomal_eS19_CS"/>
</dbReference>
<dbReference type="InterPro" id="IPR036388">
    <property type="entry name" value="WH-like_DNA-bd_sf"/>
</dbReference>
<dbReference type="InterPro" id="IPR036390">
    <property type="entry name" value="WH_DNA-bd_sf"/>
</dbReference>
<dbReference type="PANTHER" id="PTHR11710">
    <property type="entry name" value="40S RIBOSOMAL PROTEIN S19"/>
    <property type="match status" value="1"/>
</dbReference>
<dbReference type="PANTHER" id="PTHR11710:SF0">
    <property type="entry name" value="40S RIBOSOMAL PROTEIN S19"/>
    <property type="match status" value="1"/>
</dbReference>
<dbReference type="Pfam" id="PF01090">
    <property type="entry name" value="Ribosomal_S19e"/>
    <property type="match status" value="1"/>
</dbReference>
<dbReference type="SMART" id="SM01413">
    <property type="entry name" value="Ribosomal_S19e"/>
    <property type="match status" value="1"/>
</dbReference>
<dbReference type="SUPFAM" id="SSF46785">
    <property type="entry name" value="Winged helix' DNA-binding domain"/>
    <property type="match status" value="1"/>
</dbReference>
<dbReference type="PROSITE" id="PS00628">
    <property type="entry name" value="RIBOSOMAL_S19E"/>
    <property type="match status" value="1"/>
</dbReference>
<sequence length="143" mass="16062">MAGVSVKDVDAQQFINAYAAFLKRSGKMTTPQWIDIVKTGTHKELAPYDPDWYYVRAAAIARHIYLRKQVGVGRLCKVYGGSVNRGMRPSHHRDGSGSVQRKVVQSLEKIGVLEKSDNGGRRISQQGQRDLDRIAYSLLEDEE</sequence>
<proteinExistence type="inferred from homology"/>
<organism>
    <name type="scientific">Schizosaccharomyces pombe (strain 972 / ATCC 24843)</name>
    <name type="common">Fission yeast</name>
    <dbReference type="NCBI Taxonomy" id="284812"/>
    <lineage>
        <taxon>Eukaryota</taxon>
        <taxon>Fungi</taxon>
        <taxon>Dikarya</taxon>
        <taxon>Ascomycota</taxon>
        <taxon>Taphrinomycotina</taxon>
        <taxon>Schizosaccharomycetes</taxon>
        <taxon>Schizosaccharomycetales</taxon>
        <taxon>Schizosaccharomycetaceae</taxon>
        <taxon>Schizosaccharomyces</taxon>
    </lineage>
</organism>
<name>RS19B_SCHPO</name>
<protein>
    <recommendedName>
        <fullName evidence="3">Small ribosomal subunit protein eS19B</fullName>
    </recommendedName>
    <alternativeName>
        <fullName>40S ribosomal protein S19-B</fullName>
    </alternativeName>
    <alternativeName>
        <fullName>S16-B</fullName>
    </alternativeName>
</protein>
<reference key="1">
    <citation type="journal article" date="2002" name="Nature">
        <title>The genome sequence of Schizosaccharomyces pombe.</title>
        <authorList>
            <person name="Wood V."/>
            <person name="Gwilliam R."/>
            <person name="Rajandream M.A."/>
            <person name="Lyne M.H."/>
            <person name="Lyne R."/>
            <person name="Stewart A."/>
            <person name="Sgouros J.G."/>
            <person name="Peat N."/>
            <person name="Hayles J."/>
            <person name="Baker S.G."/>
            <person name="Basham D."/>
            <person name="Bowman S."/>
            <person name="Brooks K."/>
            <person name="Brown D."/>
            <person name="Brown S."/>
            <person name="Chillingworth T."/>
            <person name="Churcher C.M."/>
            <person name="Collins M."/>
            <person name="Connor R."/>
            <person name="Cronin A."/>
            <person name="Davis P."/>
            <person name="Feltwell T."/>
            <person name="Fraser A."/>
            <person name="Gentles S."/>
            <person name="Goble A."/>
            <person name="Hamlin N."/>
            <person name="Harris D.E."/>
            <person name="Hidalgo J."/>
            <person name="Hodgson G."/>
            <person name="Holroyd S."/>
            <person name="Hornsby T."/>
            <person name="Howarth S."/>
            <person name="Huckle E.J."/>
            <person name="Hunt S."/>
            <person name="Jagels K."/>
            <person name="James K.D."/>
            <person name="Jones L."/>
            <person name="Jones M."/>
            <person name="Leather S."/>
            <person name="McDonald S."/>
            <person name="McLean J."/>
            <person name="Mooney P."/>
            <person name="Moule S."/>
            <person name="Mungall K.L."/>
            <person name="Murphy L.D."/>
            <person name="Niblett D."/>
            <person name="Odell C."/>
            <person name="Oliver K."/>
            <person name="O'Neil S."/>
            <person name="Pearson D."/>
            <person name="Quail M.A."/>
            <person name="Rabbinowitsch E."/>
            <person name="Rutherford K.M."/>
            <person name="Rutter S."/>
            <person name="Saunders D."/>
            <person name="Seeger K."/>
            <person name="Sharp S."/>
            <person name="Skelton J."/>
            <person name="Simmonds M.N."/>
            <person name="Squares R."/>
            <person name="Squares S."/>
            <person name="Stevens K."/>
            <person name="Taylor K."/>
            <person name="Taylor R.G."/>
            <person name="Tivey A."/>
            <person name="Walsh S.V."/>
            <person name="Warren T."/>
            <person name="Whitehead S."/>
            <person name="Woodward J.R."/>
            <person name="Volckaert G."/>
            <person name="Aert R."/>
            <person name="Robben J."/>
            <person name="Grymonprez B."/>
            <person name="Weltjens I."/>
            <person name="Vanstreels E."/>
            <person name="Rieger M."/>
            <person name="Schaefer M."/>
            <person name="Mueller-Auer S."/>
            <person name="Gabel C."/>
            <person name="Fuchs M."/>
            <person name="Duesterhoeft A."/>
            <person name="Fritzc C."/>
            <person name="Holzer E."/>
            <person name="Moestl D."/>
            <person name="Hilbert H."/>
            <person name="Borzym K."/>
            <person name="Langer I."/>
            <person name="Beck A."/>
            <person name="Lehrach H."/>
            <person name="Reinhardt R."/>
            <person name="Pohl T.M."/>
            <person name="Eger P."/>
            <person name="Zimmermann W."/>
            <person name="Wedler H."/>
            <person name="Wambutt R."/>
            <person name="Purnelle B."/>
            <person name="Goffeau A."/>
            <person name="Cadieu E."/>
            <person name="Dreano S."/>
            <person name="Gloux S."/>
            <person name="Lelaure V."/>
            <person name="Mottier S."/>
            <person name="Galibert F."/>
            <person name="Aves S.J."/>
            <person name="Xiang Z."/>
            <person name="Hunt C."/>
            <person name="Moore K."/>
            <person name="Hurst S.M."/>
            <person name="Lucas M."/>
            <person name="Rochet M."/>
            <person name="Gaillardin C."/>
            <person name="Tallada V.A."/>
            <person name="Garzon A."/>
            <person name="Thode G."/>
            <person name="Daga R.R."/>
            <person name="Cruzado L."/>
            <person name="Jimenez J."/>
            <person name="Sanchez M."/>
            <person name="del Rey F."/>
            <person name="Benito J."/>
            <person name="Dominguez A."/>
            <person name="Revuelta J.L."/>
            <person name="Moreno S."/>
            <person name="Armstrong J."/>
            <person name="Forsburg S.L."/>
            <person name="Cerutti L."/>
            <person name="Lowe T."/>
            <person name="McCombie W.R."/>
            <person name="Paulsen I."/>
            <person name="Potashkin J."/>
            <person name="Shpakovski G.V."/>
            <person name="Ussery D."/>
            <person name="Barrell B.G."/>
            <person name="Nurse P."/>
        </authorList>
    </citation>
    <scope>NUCLEOTIDE SEQUENCE [LARGE SCALE GENOMIC DNA]</scope>
    <source>
        <strain>972 / ATCC 24843</strain>
    </source>
</reference>
<reference key="2">
    <citation type="journal article" date="2006" name="Nat. Biotechnol.">
        <title>ORFeome cloning and global analysis of protein localization in the fission yeast Schizosaccharomyces pombe.</title>
        <authorList>
            <person name="Matsuyama A."/>
            <person name="Arai R."/>
            <person name="Yashiroda Y."/>
            <person name="Shirai A."/>
            <person name="Kamata A."/>
            <person name="Sekido S."/>
            <person name="Kobayashi Y."/>
            <person name="Hashimoto A."/>
            <person name="Hamamoto M."/>
            <person name="Hiraoka Y."/>
            <person name="Horinouchi S."/>
            <person name="Yoshida M."/>
        </authorList>
    </citation>
    <scope>SUBCELLULAR LOCATION [LARGE SCALE ANALYSIS]</scope>
</reference>
<feature type="chain" id="PRO_0000153834" description="Small ribosomal subunit protein eS19B">
    <location>
        <begin position="1"/>
        <end position="143"/>
    </location>
</feature>